<gene>
    <name evidence="1" type="primary">rppH</name>
    <name evidence="1" type="synonym">nudH</name>
    <name type="ordered locus">BPEN_272</name>
</gene>
<sequence length="158" mass="19464">MIDDNGYRLNVGIVLCNTHQQVLWARKYKQHYCWQFPQGGINIGETPEQAMYRELFEEIGLNYQDVRILSSTQYWMHYKLPKKLIRWKIRPICFGQKQKWFLLKLLSKDTRINIKSNKDYTFDRWKWVSLWYPIRRVVFFKRDVYRKVMQEFVDVIIS</sequence>
<name>RPPH_BLOPB</name>
<feature type="chain" id="PRO_0000231898" description="RNA pyrophosphohydrolase">
    <location>
        <begin position="1"/>
        <end position="158"/>
    </location>
</feature>
<feature type="domain" description="Nudix hydrolase" evidence="1">
    <location>
        <begin position="6"/>
        <end position="150"/>
    </location>
</feature>
<feature type="short sequence motif" description="Nudix box">
    <location>
        <begin position="39"/>
        <end position="60"/>
    </location>
</feature>
<proteinExistence type="inferred from homology"/>
<reference key="1">
    <citation type="journal article" date="2005" name="Genome Res.">
        <title>Genome sequence of Blochmannia pennsylvanicus indicates parallel evolutionary trends among bacterial mutualists of insects.</title>
        <authorList>
            <person name="Degnan P.H."/>
            <person name="Lazarus A.B."/>
            <person name="Wernegreen J.J."/>
        </authorList>
    </citation>
    <scope>NUCLEOTIDE SEQUENCE [LARGE SCALE GENOMIC DNA]</scope>
    <source>
        <strain>BPEN</strain>
    </source>
</reference>
<organism>
    <name type="scientific">Blochmanniella pennsylvanica (strain BPEN)</name>
    <dbReference type="NCBI Taxonomy" id="291272"/>
    <lineage>
        <taxon>Bacteria</taxon>
        <taxon>Pseudomonadati</taxon>
        <taxon>Pseudomonadota</taxon>
        <taxon>Gammaproteobacteria</taxon>
        <taxon>Enterobacterales</taxon>
        <taxon>Enterobacteriaceae</taxon>
        <taxon>ant endosymbionts</taxon>
        <taxon>Candidatus Blochmanniella</taxon>
    </lineage>
</organism>
<comment type="function">
    <text evidence="1">Accelerates the degradation of transcripts by removing pyrophosphate from the 5'-end of triphosphorylated RNA, leading to a more labile monophosphorylated state that can stimulate subsequent ribonuclease cleavage.</text>
</comment>
<comment type="cofactor">
    <cofactor evidence="1">
        <name>a divalent metal cation</name>
        <dbReference type="ChEBI" id="CHEBI:60240"/>
    </cofactor>
</comment>
<comment type="similarity">
    <text evidence="1">Belongs to the Nudix hydrolase family. RppH subfamily.</text>
</comment>
<evidence type="ECO:0000255" key="1">
    <source>
        <dbReference type="HAMAP-Rule" id="MF_00298"/>
    </source>
</evidence>
<accession>Q493D9</accession>
<dbReference type="EC" id="3.6.1.-" evidence="1"/>
<dbReference type="EMBL" id="CP000016">
    <property type="protein sequence ID" value="AAZ40903.1"/>
    <property type="molecule type" value="Genomic_DNA"/>
</dbReference>
<dbReference type="RefSeq" id="WP_011282810.1">
    <property type="nucleotide sequence ID" value="NC_007292.1"/>
</dbReference>
<dbReference type="SMR" id="Q493D9"/>
<dbReference type="STRING" id="291272.BPEN_272"/>
<dbReference type="KEGG" id="bpn:BPEN_272"/>
<dbReference type="eggNOG" id="COG0494">
    <property type="taxonomic scope" value="Bacteria"/>
</dbReference>
<dbReference type="HOGENOM" id="CLU_087195_3_1_6"/>
<dbReference type="OrthoDB" id="9816040at2"/>
<dbReference type="Proteomes" id="UP000007794">
    <property type="component" value="Chromosome"/>
</dbReference>
<dbReference type="GO" id="GO:0005737">
    <property type="term" value="C:cytoplasm"/>
    <property type="evidence" value="ECO:0007669"/>
    <property type="project" value="TreeGrafter"/>
</dbReference>
<dbReference type="GO" id="GO:0034353">
    <property type="term" value="F:mRNA 5'-diphosphatase activity"/>
    <property type="evidence" value="ECO:0007669"/>
    <property type="project" value="TreeGrafter"/>
</dbReference>
<dbReference type="GO" id="GO:0006402">
    <property type="term" value="P:mRNA catabolic process"/>
    <property type="evidence" value="ECO:0007669"/>
    <property type="project" value="TreeGrafter"/>
</dbReference>
<dbReference type="CDD" id="cd03671">
    <property type="entry name" value="NUDIX_Ap4A_hydrolase_plant_like"/>
    <property type="match status" value="1"/>
</dbReference>
<dbReference type="FunFam" id="3.90.79.10:FF:000001">
    <property type="entry name" value="RNA pyrophosphohydrolase"/>
    <property type="match status" value="1"/>
</dbReference>
<dbReference type="Gene3D" id="3.90.79.10">
    <property type="entry name" value="Nucleoside Triphosphate Pyrophosphohydrolase"/>
    <property type="match status" value="1"/>
</dbReference>
<dbReference type="HAMAP" id="MF_00298">
    <property type="entry name" value="Nudix_RppH"/>
    <property type="match status" value="1"/>
</dbReference>
<dbReference type="InterPro" id="IPR020476">
    <property type="entry name" value="Nudix_hydrolase"/>
</dbReference>
<dbReference type="InterPro" id="IPR015797">
    <property type="entry name" value="NUDIX_hydrolase-like_dom_sf"/>
</dbReference>
<dbReference type="InterPro" id="IPR020084">
    <property type="entry name" value="NUDIX_hydrolase_CS"/>
</dbReference>
<dbReference type="InterPro" id="IPR000086">
    <property type="entry name" value="NUDIX_hydrolase_dom"/>
</dbReference>
<dbReference type="InterPro" id="IPR022927">
    <property type="entry name" value="RppH"/>
</dbReference>
<dbReference type="NCBIfam" id="NF001934">
    <property type="entry name" value="PRK00714.1-1"/>
    <property type="match status" value="1"/>
</dbReference>
<dbReference type="NCBIfam" id="NF001937">
    <property type="entry name" value="PRK00714.1-4"/>
    <property type="match status" value="1"/>
</dbReference>
<dbReference type="NCBIfam" id="NF001938">
    <property type="entry name" value="PRK00714.1-5"/>
    <property type="match status" value="1"/>
</dbReference>
<dbReference type="PANTHER" id="PTHR23114">
    <property type="entry name" value="M7GPPPN-MRNA HYDROLASE"/>
    <property type="match status" value="1"/>
</dbReference>
<dbReference type="PANTHER" id="PTHR23114:SF17">
    <property type="entry name" value="M7GPPPN-MRNA HYDROLASE"/>
    <property type="match status" value="1"/>
</dbReference>
<dbReference type="Pfam" id="PF00293">
    <property type="entry name" value="NUDIX"/>
    <property type="match status" value="1"/>
</dbReference>
<dbReference type="PRINTS" id="PR00502">
    <property type="entry name" value="NUDIXFAMILY"/>
</dbReference>
<dbReference type="SUPFAM" id="SSF55811">
    <property type="entry name" value="Nudix"/>
    <property type="match status" value="1"/>
</dbReference>
<dbReference type="PROSITE" id="PS51462">
    <property type="entry name" value="NUDIX"/>
    <property type="match status" value="1"/>
</dbReference>
<dbReference type="PROSITE" id="PS00893">
    <property type="entry name" value="NUDIX_BOX"/>
    <property type="match status" value="1"/>
</dbReference>
<keyword id="KW-0378">Hydrolase</keyword>
<keyword id="KW-1185">Reference proteome</keyword>
<protein>
    <recommendedName>
        <fullName evidence="1">RNA pyrophosphohydrolase</fullName>
        <ecNumber evidence="1">3.6.1.-</ecNumber>
    </recommendedName>
    <alternativeName>
        <fullName evidence="1">(Di)nucleoside polyphosphate hydrolase</fullName>
    </alternativeName>
</protein>